<comment type="function">
    <text evidence="1">Catalyzes oxygen-dependent 5-hydroxyuridine (ho5U) modification at position 34 in tRNAs.</text>
</comment>
<comment type="catalytic activity">
    <reaction evidence="1">
        <text>uridine(34) in tRNA + AH2 + O2 = 5-hydroxyuridine(34) in tRNA + A + H2O</text>
        <dbReference type="Rhea" id="RHEA:64224"/>
        <dbReference type="Rhea" id="RHEA-COMP:11727"/>
        <dbReference type="Rhea" id="RHEA-COMP:13381"/>
        <dbReference type="ChEBI" id="CHEBI:13193"/>
        <dbReference type="ChEBI" id="CHEBI:15377"/>
        <dbReference type="ChEBI" id="CHEBI:15379"/>
        <dbReference type="ChEBI" id="CHEBI:17499"/>
        <dbReference type="ChEBI" id="CHEBI:65315"/>
        <dbReference type="ChEBI" id="CHEBI:136877"/>
    </reaction>
</comment>
<comment type="similarity">
    <text evidence="1">Belongs to the TrhO family.</text>
</comment>
<proteinExistence type="inferred from homology"/>
<evidence type="ECO:0000255" key="1">
    <source>
        <dbReference type="HAMAP-Rule" id="MF_00469"/>
    </source>
</evidence>
<reference key="1">
    <citation type="journal article" date="2008" name="Chem. Biol. Interact.">
        <title>Extending the Bacillus cereus group genomics to putative food-borne pathogens of different toxicity.</title>
        <authorList>
            <person name="Lapidus A."/>
            <person name="Goltsman E."/>
            <person name="Auger S."/>
            <person name="Galleron N."/>
            <person name="Segurens B."/>
            <person name="Dossat C."/>
            <person name="Land M.L."/>
            <person name="Broussolle V."/>
            <person name="Brillard J."/>
            <person name="Guinebretiere M.-H."/>
            <person name="Sanchis V."/>
            <person name="Nguen-the C."/>
            <person name="Lereclus D."/>
            <person name="Richardson P."/>
            <person name="Wincker P."/>
            <person name="Weissenbach J."/>
            <person name="Ehrlich S.D."/>
            <person name="Sorokin A."/>
        </authorList>
    </citation>
    <scope>NUCLEOTIDE SEQUENCE [LARGE SCALE GENOMIC DNA]</scope>
    <source>
        <strain>DSM 22905 / CIP 110041 / 391-98 / NVH 391-98</strain>
    </source>
</reference>
<name>TRHO_BACCN</name>
<gene>
    <name evidence="1" type="primary">trhO</name>
    <name type="ordered locus">Bcer98_1464</name>
</gene>
<feature type="chain" id="PRO_1000081184" description="tRNA uridine(34) hydroxylase">
    <location>
        <begin position="1"/>
        <end position="324"/>
    </location>
</feature>
<feature type="domain" description="Rhodanese" evidence="1">
    <location>
        <begin position="127"/>
        <end position="221"/>
    </location>
</feature>
<feature type="active site" description="Cysteine persulfide intermediate" evidence="1">
    <location>
        <position position="181"/>
    </location>
</feature>
<sequence>MAIKKPYRVLLYYMYTTIENPEEFAAEHLQFCNSLELKGRILVAKEGINGTASGTTEQTEKYMEAMKNDPRFAGIVFKVDEADGHAFKKMHVRPRSELVTLRLEDDINPKELTGKYLEPKEFYEAMQQEETIVIDARNDYEYDLGHFRGAIKPEIKSFRELPNWIKENKEVLEGKKILTYCTGGIRCEKFSGWLVREGFEDVSQLHGGIVTYGKDPEVQGELWDGQCYVFDERIAVPVNQKEHVIVGRDHFTNEPCERYVNCANPECNKQILCSEENEAKYLRACSHECRVHPRNRYVKEHELTEEQVAAALEKIEAENQVKLG</sequence>
<protein>
    <recommendedName>
        <fullName evidence="1">tRNA uridine(34) hydroxylase</fullName>
        <ecNumber evidence="1">1.14.-.-</ecNumber>
    </recommendedName>
    <alternativeName>
        <fullName evidence="1">tRNA hydroxylation protein O</fullName>
    </alternativeName>
</protein>
<organism>
    <name type="scientific">Bacillus cytotoxicus (strain DSM 22905 / CIP 110041 / 391-98 / NVH 391-98)</name>
    <dbReference type="NCBI Taxonomy" id="315749"/>
    <lineage>
        <taxon>Bacteria</taxon>
        <taxon>Bacillati</taxon>
        <taxon>Bacillota</taxon>
        <taxon>Bacilli</taxon>
        <taxon>Bacillales</taxon>
        <taxon>Bacillaceae</taxon>
        <taxon>Bacillus</taxon>
        <taxon>Bacillus cereus group</taxon>
    </lineage>
</organism>
<dbReference type="EC" id="1.14.-.-" evidence="1"/>
<dbReference type="EMBL" id="CP000764">
    <property type="protein sequence ID" value="ABS21781.1"/>
    <property type="molecule type" value="Genomic_DNA"/>
</dbReference>
<dbReference type="RefSeq" id="WP_012093955.1">
    <property type="nucleotide sequence ID" value="NC_009674.1"/>
</dbReference>
<dbReference type="SMR" id="A7GNS3"/>
<dbReference type="STRING" id="315749.Bcer98_1464"/>
<dbReference type="GeneID" id="33896802"/>
<dbReference type="KEGG" id="bcy:Bcer98_1464"/>
<dbReference type="eggNOG" id="COG1054">
    <property type="taxonomic scope" value="Bacteria"/>
</dbReference>
<dbReference type="HOGENOM" id="CLU_038878_1_0_9"/>
<dbReference type="OrthoDB" id="9778326at2"/>
<dbReference type="Proteomes" id="UP000002300">
    <property type="component" value="Chromosome"/>
</dbReference>
<dbReference type="GO" id="GO:0016705">
    <property type="term" value="F:oxidoreductase activity, acting on paired donors, with incorporation or reduction of molecular oxygen"/>
    <property type="evidence" value="ECO:0007669"/>
    <property type="project" value="UniProtKB-UniRule"/>
</dbReference>
<dbReference type="GO" id="GO:0006400">
    <property type="term" value="P:tRNA modification"/>
    <property type="evidence" value="ECO:0007669"/>
    <property type="project" value="UniProtKB-UniRule"/>
</dbReference>
<dbReference type="CDD" id="cd01518">
    <property type="entry name" value="RHOD_YceA"/>
    <property type="match status" value="1"/>
</dbReference>
<dbReference type="Gene3D" id="3.30.70.100">
    <property type="match status" value="1"/>
</dbReference>
<dbReference type="Gene3D" id="3.40.250.10">
    <property type="entry name" value="Rhodanese-like domain"/>
    <property type="match status" value="1"/>
</dbReference>
<dbReference type="HAMAP" id="MF_00469">
    <property type="entry name" value="TrhO"/>
    <property type="match status" value="1"/>
</dbReference>
<dbReference type="InterPro" id="IPR001763">
    <property type="entry name" value="Rhodanese-like_dom"/>
</dbReference>
<dbReference type="InterPro" id="IPR036873">
    <property type="entry name" value="Rhodanese-like_dom_sf"/>
</dbReference>
<dbReference type="InterPro" id="IPR022111">
    <property type="entry name" value="Rhodanese_C"/>
</dbReference>
<dbReference type="InterPro" id="IPR020936">
    <property type="entry name" value="TrhO"/>
</dbReference>
<dbReference type="InterPro" id="IPR040503">
    <property type="entry name" value="TRHO_N"/>
</dbReference>
<dbReference type="NCBIfam" id="NF001135">
    <property type="entry name" value="PRK00142.1-3"/>
    <property type="match status" value="1"/>
</dbReference>
<dbReference type="PANTHER" id="PTHR43268:SF3">
    <property type="entry name" value="RHODANESE-LIKE DOMAIN-CONTAINING PROTEIN 7-RELATED"/>
    <property type="match status" value="1"/>
</dbReference>
<dbReference type="PANTHER" id="PTHR43268">
    <property type="entry name" value="THIOSULFATE SULFURTRANSFERASE/RHODANESE-LIKE DOMAIN-CONTAINING PROTEIN 2"/>
    <property type="match status" value="1"/>
</dbReference>
<dbReference type="Pfam" id="PF00581">
    <property type="entry name" value="Rhodanese"/>
    <property type="match status" value="1"/>
</dbReference>
<dbReference type="Pfam" id="PF12368">
    <property type="entry name" value="Rhodanese_C"/>
    <property type="match status" value="1"/>
</dbReference>
<dbReference type="Pfam" id="PF17773">
    <property type="entry name" value="UPF0176_N"/>
    <property type="match status" value="1"/>
</dbReference>
<dbReference type="SMART" id="SM00450">
    <property type="entry name" value="RHOD"/>
    <property type="match status" value="1"/>
</dbReference>
<dbReference type="SUPFAM" id="SSF52821">
    <property type="entry name" value="Rhodanese/Cell cycle control phosphatase"/>
    <property type="match status" value="1"/>
</dbReference>
<dbReference type="PROSITE" id="PS50206">
    <property type="entry name" value="RHODANESE_3"/>
    <property type="match status" value="1"/>
</dbReference>
<accession>A7GNS3</accession>
<keyword id="KW-0560">Oxidoreductase</keyword>
<keyword id="KW-0819">tRNA processing</keyword>